<dbReference type="EC" id="3.1.-.-"/>
<dbReference type="EMBL" id="X04567">
    <property type="protein sequence ID" value="CAA28227.1"/>
    <property type="molecule type" value="Genomic_DNA"/>
</dbReference>
<dbReference type="EMBL" id="AF158101">
    <property type="protein sequence ID" value="AAD42652.1"/>
    <property type="molecule type" value="Genomic_DNA"/>
</dbReference>
<dbReference type="RefSeq" id="NP_049726.1">
    <property type="nucleotide sequence ID" value="NC_000866.4"/>
</dbReference>
<dbReference type="PDB" id="2HX6">
    <property type="method" value="NMR"/>
    <property type="chains" value="A=1-153"/>
</dbReference>
<dbReference type="PDBsum" id="2HX6"/>
<dbReference type="BMRB" id="P13312"/>
<dbReference type="SMR" id="P13312"/>
<dbReference type="GeneID" id="1258703"/>
<dbReference type="KEGG" id="vg:1258703"/>
<dbReference type="OrthoDB" id="11716at10239"/>
<dbReference type="BRENDA" id="4.6.1.25">
    <property type="organism ID" value="732"/>
</dbReference>
<dbReference type="EvolutionaryTrace" id="P13312"/>
<dbReference type="Proteomes" id="UP000009087">
    <property type="component" value="Segment"/>
</dbReference>
<dbReference type="GO" id="GO:0004518">
    <property type="term" value="F:nuclease activity"/>
    <property type="evidence" value="ECO:0007669"/>
    <property type="project" value="UniProtKB-KW"/>
</dbReference>
<dbReference type="InterPro" id="IPR019653">
    <property type="entry name" value="T4_endoribonuclease_RegB"/>
</dbReference>
<dbReference type="Pfam" id="PF10715">
    <property type="entry name" value="REGB_T4"/>
    <property type="match status" value="1"/>
</dbReference>
<sequence length="153" mass="17977">MTINTEVFIRRNKLRRHFESEFRQINNEIREASKAAGVSSFHLKYSQHLLDRAIQREIDETYVFELFHKIKDHVLEVNEFLSMPPRPDIDEDFIDGVEYRPGRLEITDGNLWLGFTVCKPNEKFKDPSLQCRMAIINSRRLPGKASKAVIKTQ</sequence>
<gene>
    <name type="primary">regB</name>
    <name type="synonym">61.9</name>
</gene>
<feature type="chain" id="PRO_0000164973" description="Endoribonuclease RegB">
    <location>
        <begin position="1"/>
        <end position="153"/>
    </location>
</feature>
<feature type="helix" evidence="3">
    <location>
        <begin position="4"/>
        <end position="36"/>
    </location>
</feature>
<feature type="strand" evidence="3">
    <location>
        <begin position="42"/>
        <end position="44"/>
    </location>
</feature>
<feature type="helix" evidence="3">
    <location>
        <begin position="47"/>
        <end position="55"/>
    </location>
</feature>
<feature type="helix" evidence="3">
    <location>
        <begin position="62"/>
        <end position="69"/>
    </location>
</feature>
<feature type="helix" evidence="3">
    <location>
        <begin position="70"/>
        <end position="73"/>
    </location>
</feature>
<feature type="helix" evidence="3">
    <location>
        <begin position="74"/>
        <end position="81"/>
    </location>
</feature>
<feature type="strand" evidence="3">
    <location>
        <begin position="82"/>
        <end position="84"/>
    </location>
</feature>
<feature type="strand" evidence="3">
    <location>
        <begin position="88"/>
        <end position="92"/>
    </location>
</feature>
<feature type="strand" evidence="3">
    <location>
        <begin position="102"/>
        <end position="108"/>
    </location>
</feature>
<feature type="strand" evidence="3">
    <location>
        <begin position="111"/>
        <end position="117"/>
    </location>
</feature>
<feature type="strand" evidence="3">
    <location>
        <begin position="125"/>
        <end position="136"/>
    </location>
</feature>
<protein>
    <recommendedName>
        <fullName>Endoribonuclease RegB</fullName>
        <ecNumber>3.1.-.-</ecNumber>
    </recommendedName>
    <alternativeName>
        <fullName>Gp61.9</fullName>
    </alternativeName>
</protein>
<name>REGB_BPT4</name>
<accession>P13312</accession>
<organism>
    <name type="scientific">Enterobacteria phage T4</name>
    <name type="common">Bacteriophage T4</name>
    <dbReference type="NCBI Taxonomy" id="10665"/>
    <lineage>
        <taxon>Viruses</taxon>
        <taxon>Duplodnaviria</taxon>
        <taxon>Heunggongvirae</taxon>
        <taxon>Uroviricota</taxon>
        <taxon>Caudoviricetes</taxon>
        <taxon>Straboviridae</taxon>
        <taxon>Tevenvirinae</taxon>
        <taxon>Tequatrovirus</taxon>
    </lineage>
</organism>
<evidence type="ECO:0000269" key="1">
    <source>
    </source>
</evidence>
<evidence type="ECO:0000269" key="2">
    <source>
    </source>
</evidence>
<evidence type="ECO:0007829" key="3">
    <source>
        <dbReference type="PDB" id="2HX6"/>
    </source>
</evidence>
<keyword id="KW-0002">3D-structure</keyword>
<keyword id="KW-0378">Hydrolase</keyword>
<keyword id="KW-0540">Nuclease</keyword>
<keyword id="KW-1185">Reference proteome</keyword>
<organismHost>
    <name type="scientific">Escherichia coli</name>
    <dbReference type="NCBI Taxonomy" id="562"/>
</organismHost>
<proteinExistence type="evidence at protein level"/>
<reference key="1">
    <citation type="journal article" date="1986" name="Nucleic Acids Res.">
        <title>Nucleotide sequence and analysis of the 58.3 to 65.5-kb early region of bacteriophage T4.</title>
        <authorList>
            <person name="Valerie K."/>
            <person name="Stevens J."/>
            <person name="Lynch M."/>
            <person name="Henderson E.E."/>
            <person name="de Riel J.K."/>
        </authorList>
    </citation>
    <scope>NUCLEOTIDE SEQUENCE [GENOMIC DNA]</scope>
</reference>
<reference key="2">
    <citation type="journal article" date="2003" name="Microbiol. Mol. Biol. Rev.">
        <title>Bacteriophage T4 genome.</title>
        <authorList>
            <person name="Miller E.S."/>
            <person name="Kutter E."/>
            <person name="Mosig G."/>
            <person name="Arisaka F."/>
            <person name="Kunisawa T."/>
            <person name="Ruger W."/>
        </authorList>
    </citation>
    <scope>NUCLEOTIDE SEQUENCE [LARGE SCALE GENOMIC DNA]</scope>
</reference>
<reference key="3">
    <citation type="journal article" date="1989" name="New Biol.">
        <title>Identification of a T4 gene required for bacteriophage mRNA processing.</title>
        <authorList>
            <person name="Ruckman J."/>
            <person name="Parma D."/>
            <person name="Tuerk C."/>
            <person name="Hall D.H."/>
            <person name="Gold L."/>
        </authorList>
    </citation>
    <scope>IDENTIFICATION OF PROTEIN</scope>
    <scope>FUNCTION</scope>
</reference>
<reference key="4">
    <citation type="journal article" date="2006" name="Nucleic Acids Res.">
        <title>Activation of RegB endoribonuclease by S1 ribosomal protein requires an 11 nt conserved sequence.</title>
        <authorList>
            <person name="Durand S."/>
            <person name="Richard G."/>
            <person name="Bisaglia M."/>
            <person name="Laalami S."/>
            <person name="Bontems F."/>
            <person name="Uzan M."/>
        </authorList>
    </citation>
    <scope>FUNCTION</scope>
    <scope>SUBSTRATE SPECIFICITY</scope>
    <scope>ACTIVITY REGULATION</scope>
</reference>
<reference key="5">
    <citation type="journal article" date="2007" name="J. Biol. Chem.">
        <title>Structural and functional studies of RegB, a new member of a family of sequence-specific ribonucleases involved in mRNA inactivation on the ribosome.</title>
        <authorList>
            <person name="Odaert B."/>
            <person name="Saida F."/>
            <person name="Aliprandi P."/>
            <person name="Durand S."/>
            <person name="Crechet J.B."/>
            <person name="Guerois R."/>
            <person name="Laalami S."/>
            <person name="Uzan M."/>
            <person name="Bontems F."/>
        </authorList>
    </citation>
    <scope>STRUCTURE BY NMR</scope>
</reference>
<comment type="function">
    <text evidence="1 2">Essential to the early nucleolytic processing of a number of T4 messenger RNAs. Specifically cleaves after the GG dinucleotide GGAG within consensus 5'-GGAGRAYARAA-3' (R is a purine and Y is a pyrimidine) sequences found mainly in translation initiation sites.</text>
</comment>
<comment type="activity regulation">
    <text evidence="1">Activity is stimulated 10- to 100-fold by host ribosomal protein S1, which also helps confer substrate choice.</text>
</comment>